<feature type="chain" id="PRO_0000287347" description="RNA exonuclease 5">
    <location>
        <begin position="1"/>
        <end position="754"/>
    </location>
</feature>
<feature type="domain" description="Exonuclease">
    <location>
        <begin position="222"/>
        <end position="370"/>
    </location>
</feature>
<feature type="domain" description="RRM 1" evidence="1">
    <location>
        <begin position="488"/>
        <end position="562"/>
    </location>
</feature>
<feature type="domain" description="RRM 2" evidence="1">
    <location>
        <begin position="583"/>
        <end position="662"/>
    </location>
</feature>
<feature type="region of interest" description="Disordered" evidence="2">
    <location>
        <begin position="1"/>
        <end position="36"/>
    </location>
</feature>
<organism>
    <name type="scientific">Rattus norvegicus</name>
    <name type="common">Rat</name>
    <dbReference type="NCBI Taxonomy" id="10116"/>
    <lineage>
        <taxon>Eukaryota</taxon>
        <taxon>Metazoa</taxon>
        <taxon>Chordata</taxon>
        <taxon>Craniata</taxon>
        <taxon>Vertebrata</taxon>
        <taxon>Euteleostomi</taxon>
        <taxon>Mammalia</taxon>
        <taxon>Eutheria</taxon>
        <taxon>Euarchontoglires</taxon>
        <taxon>Glires</taxon>
        <taxon>Rodentia</taxon>
        <taxon>Myomorpha</taxon>
        <taxon>Muroidea</taxon>
        <taxon>Muridae</taxon>
        <taxon>Murinae</taxon>
        <taxon>Rattus</taxon>
    </lineage>
</organism>
<accession>A1A5R7</accession>
<reference key="1">
    <citation type="journal article" date="2004" name="Genome Res.">
        <title>The status, quality, and expansion of the NIH full-length cDNA project: the Mammalian Gene Collection (MGC).</title>
        <authorList>
            <consortium name="The MGC Project Team"/>
        </authorList>
    </citation>
    <scope>NUCLEOTIDE SEQUENCE [LARGE SCALE MRNA]</scope>
    <source>
        <tissue>Testis</tissue>
    </source>
</reference>
<proteinExistence type="evidence at transcript level"/>
<evidence type="ECO:0000255" key="1">
    <source>
        <dbReference type="PROSITE-ProRule" id="PRU00176"/>
    </source>
</evidence>
<evidence type="ECO:0000256" key="2">
    <source>
        <dbReference type="SAM" id="MobiDB-lite"/>
    </source>
</evidence>
<protein>
    <recommendedName>
        <fullName>RNA exonuclease 5</fullName>
        <ecNumber>3.1.-.-</ecNumber>
    </recommendedName>
    <alternativeName>
        <fullName>Putative RNA exonuclease NEF-sp</fullName>
    </alternativeName>
</protein>
<name>REXO5_RAT</name>
<dbReference type="EC" id="3.1.-.-"/>
<dbReference type="EMBL" id="BC128775">
    <property type="protein sequence ID" value="AAI28776.1"/>
    <property type="molecule type" value="mRNA"/>
</dbReference>
<dbReference type="RefSeq" id="NP_001073174.1">
    <property type="nucleotide sequence ID" value="NM_001079706.1"/>
</dbReference>
<dbReference type="RefSeq" id="XP_063119757.1">
    <property type="nucleotide sequence ID" value="XM_063263687.1"/>
</dbReference>
<dbReference type="RefSeq" id="XP_063119760.1">
    <property type="nucleotide sequence ID" value="XM_063263690.1"/>
</dbReference>
<dbReference type="SMR" id="A1A5R7"/>
<dbReference type="FunCoup" id="A1A5R7">
    <property type="interactions" value="1273"/>
</dbReference>
<dbReference type="STRING" id="10116.ENSRNOP00000073863"/>
<dbReference type="CarbonylDB" id="A1A5R7"/>
<dbReference type="PhosphoSitePlus" id="A1A5R7"/>
<dbReference type="PaxDb" id="10116-ENSRNOP00000019654"/>
<dbReference type="PeptideAtlas" id="A1A5R7"/>
<dbReference type="Ensembl" id="ENSRNOT00000019654.8">
    <property type="protein sequence ID" value="ENSRNOP00000019654.6"/>
    <property type="gene ID" value="ENSRNOG00000014513.8"/>
</dbReference>
<dbReference type="GeneID" id="309036"/>
<dbReference type="KEGG" id="rno:309036"/>
<dbReference type="UCSC" id="RGD:1305412">
    <property type="organism name" value="rat"/>
</dbReference>
<dbReference type="AGR" id="RGD:1305412"/>
<dbReference type="CTD" id="81691"/>
<dbReference type="RGD" id="1305412">
    <property type="gene designation" value="Rexo5"/>
</dbReference>
<dbReference type="eggNOG" id="KOG2248">
    <property type="taxonomic scope" value="Eukaryota"/>
</dbReference>
<dbReference type="GeneTree" id="ENSGT00940000161162"/>
<dbReference type="HOGENOM" id="CLU_024781_0_0_1"/>
<dbReference type="InParanoid" id="A1A5R7"/>
<dbReference type="OMA" id="PHICIQY"/>
<dbReference type="OrthoDB" id="3996471at2759"/>
<dbReference type="PhylomeDB" id="A1A5R7"/>
<dbReference type="PRO" id="PR:A1A5R7"/>
<dbReference type="Proteomes" id="UP000002494">
    <property type="component" value="Chromosome 1"/>
</dbReference>
<dbReference type="Bgee" id="ENSRNOG00000014513">
    <property type="expression patterns" value="Expressed in testis and 18 other cell types or tissues"/>
</dbReference>
<dbReference type="ExpressionAtlas" id="A1A5R7">
    <property type="expression patterns" value="baseline and differential"/>
</dbReference>
<dbReference type="GO" id="GO:0005634">
    <property type="term" value="C:nucleus"/>
    <property type="evidence" value="ECO:0000318"/>
    <property type="project" value="GO_Central"/>
</dbReference>
<dbReference type="GO" id="GO:0004527">
    <property type="term" value="F:exonuclease activity"/>
    <property type="evidence" value="ECO:0000318"/>
    <property type="project" value="GO_Central"/>
</dbReference>
<dbReference type="GO" id="GO:0003723">
    <property type="term" value="F:RNA binding"/>
    <property type="evidence" value="ECO:0007669"/>
    <property type="project" value="UniProtKB-KW"/>
</dbReference>
<dbReference type="GO" id="GO:0031125">
    <property type="term" value="P:rRNA 3'-end processing"/>
    <property type="evidence" value="ECO:0000318"/>
    <property type="project" value="GO_Central"/>
</dbReference>
<dbReference type="CDD" id="cd06145">
    <property type="entry name" value="REX1_like"/>
    <property type="match status" value="1"/>
</dbReference>
<dbReference type="FunFam" id="3.30.70.330:FF:000528">
    <property type="entry name" value="RNA exonuclease 5"/>
    <property type="match status" value="1"/>
</dbReference>
<dbReference type="FunFam" id="3.30.420.10:FF:000055">
    <property type="entry name" value="RNA exonuclease 5 isoform X1"/>
    <property type="match status" value="1"/>
</dbReference>
<dbReference type="FunFam" id="3.30.70.330:FF:000358">
    <property type="entry name" value="RNA exonuclease 5 isoform X1"/>
    <property type="match status" value="1"/>
</dbReference>
<dbReference type="Gene3D" id="3.30.70.330">
    <property type="match status" value="2"/>
</dbReference>
<dbReference type="Gene3D" id="3.30.420.10">
    <property type="entry name" value="Ribonuclease H-like superfamily/Ribonuclease H"/>
    <property type="match status" value="1"/>
</dbReference>
<dbReference type="InterPro" id="IPR013520">
    <property type="entry name" value="Exonuclease_RNaseT/DNA_pol3"/>
</dbReference>
<dbReference type="InterPro" id="IPR012677">
    <property type="entry name" value="Nucleotide-bd_a/b_plait_sf"/>
</dbReference>
<dbReference type="InterPro" id="IPR035979">
    <property type="entry name" value="RBD_domain_sf"/>
</dbReference>
<dbReference type="InterPro" id="IPR034922">
    <property type="entry name" value="REX1-like_exo"/>
</dbReference>
<dbReference type="InterPro" id="IPR047021">
    <property type="entry name" value="REXO1/3/4-like"/>
</dbReference>
<dbReference type="InterPro" id="IPR012337">
    <property type="entry name" value="RNaseH-like_sf"/>
</dbReference>
<dbReference type="InterPro" id="IPR036397">
    <property type="entry name" value="RNaseH_sf"/>
</dbReference>
<dbReference type="InterPro" id="IPR000504">
    <property type="entry name" value="RRM_dom"/>
</dbReference>
<dbReference type="PANTHER" id="PTHR12801:SF82">
    <property type="entry name" value="RNA EXONUCLEASE 5"/>
    <property type="match status" value="1"/>
</dbReference>
<dbReference type="PANTHER" id="PTHR12801">
    <property type="entry name" value="RNA EXONUCLEASE REXO1 / RECO3 FAMILY MEMBER-RELATED"/>
    <property type="match status" value="1"/>
</dbReference>
<dbReference type="Pfam" id="PF00929">
    <property type="entry name" value="RNase_T"/>
    <property type="match status" value="1"/>
</dbReference>
<dbReference type="Pfam" id="PF00076">
    <property type="entry name" value="RRM_1"/>
    <property type="match status" value="1"/>
</dbReference>
<dbReference type="SMART" id="SM00479">
    <property type="entry name" value="EXOIII"/>
    <property type="match status" value="1"/>
</dbReference>
<dbReference type="SMART" id="SM00360">
    <property type="entry name" value="RRM"/>
    <property type="match status" value="2"/>
</dbReference>
<dbReference type="SUPFAM" id="SSF53098">
    <property type="entry name" value="Ribonuclease H-like"/>
    <property type="match status" value="1"/>
</dbReference>
<dbReference type="SUPFAM" id="SSF54928">
    <property type="entry name" value="RNA-binding domain, RBD"/>
    <property type="match status" value="1"/>
</dbReference>
<dbReference type="PROSITE" id="PS50102">
    <property type="entry name" value="RRM"/>
    <property type="match status" value="2"/>
</dbReference>
<sequence>MELEEEENPRKRKETPNSALTTELDRPSWDVQDPEPQAKKARLSTILFTDNCEVTHRQLCELLKYAILGKSTLPKPSWCQLLHQKQLNNVVVFILKGMSQLHFYRFYLEFRFLRKTFRHKFSLPPPTSSFLFDIIGLQKKKSARGCPRTVEGPLISATLKSSIDLQNDPIIQKYGYKNVSLTRCLLTKEEMKTFHFPLQGSPNCENFILLKYSGFITDSSPLFGLDCEVCLTSMGKELTRISLVAEGGYCLMDELVKPDFKILDYLTSFSGITKEILNPVTTKLKDVQKLLRELLPPDAVLVGHCLDLDLRVLKIIHPYVIDTSLLYIGKQGRRFKLTFLAKVILGKDIQCPNKLGHDGIEDARTALELVQYFLKYGPKKIAEFNLEALAANQEQGNKEGATHMRSVLECLDSMGQKLLFLTQDIDELSSYRNCQTVKCSSNKEVLEQARVEVPLFPFNIVQFSFRPFPPLFAEEMKNNMKTRWTEMSTIYAGPFSKDCNVGSLKKVFSSLGPVQSITLVLETYRPYFSIQYELLEAAQLAIETMNGTILEGSCIRVHRLLTELTLECDTLVRELEQDSENQGTIYVAGIGETFKEHLLEQSNLFPDLEAVILPKELKSRKQKNYCFLKFKTFNSAQVALEVLKGKDWKLKGRNALTSRHLQAWLKNIHPEPSMPMGLRIVPPLLERHIFRTLKANHPKIVAWRWSRRIEKLYHSLSPGTFCLILLPGTKNTFGSHPGLGLMKIKEEEGGDTLL</sequence>
<keyword id="KW-0269">Exonuclease</keyword>
<keyword id="KW-0378">Hydrolase</keyword>
<keyword id="KW-0540">Nuclease</keyword>
<keyword id="KW-1185">Reference proteome</keyword>
<keyword id="KW-0677">Repeat</keyword>
<keyword id="KW-0694">RNA-binding</keyword>
<gene>
    <name type="primary">Rexo5</name>
</gene>